<gene>
    <name evidence="1" type="primary">ribBA</name>
    <name type="ordered locus">Mflv_3719</name>
</gene>
<proteinExistence type="inferred from homology"/>
<comment type="function">
    <text evidence="1">Catalyzes the conversion of D-ribulose 5-phosphate to formate and 3,4-dihydroxy-2-butanone 4-phosphate.</text>
</comment>
<comment type="function">
    <text evidence="1">Catalyzes the conversion of GTP to 2,5-diamino-6-ribosylamino-4(3H)-pyrimidinone 5'-phosphate (DARP), formate and pyrophosphate.</text>
</comment>
<comment type="catalytic activity">
    <reaction evidence="1">
        <text>D-ribulose 5-phosphate = (2S)-2-hydroxy-3-oxobutyl phosphate + formate + H(+)</text>
        <dbReference type="Rhea" id="RHEA:18457"/>
        <dbReference type="ChEBI" id="CHEBI:15378"/>
        <dbReference type="ChEBI" id="CHEBI:15740"/>
        <dbReference type="ChEBI" id="CHEBI:58121"/>
        <dbReference type="ChEBI" id="CHEBI:58830"/>
        <dbReference type="EC" id="4.1.99.12"/>
    </reaction>
</comment>
<comment type="catalytic activity">
    <reaction evidence="1">
        <text>GTP + 4 H2O = 2,5-diamino-6-hydroxy-4-(5-phosphoribosylamino)-pyrimidine + formate + 2 phosphate + 3 H(+)</text>
        <dbReference type="Rhea" id="RHEA:23704"/>
        <dbReference type="ChEBI" id="CHEBI:15377"/>
        <dbReference type="ChEBI" id="CHEBI:15378"/>
        <dbReference type="ChEBI" id="CHEBI:15740"/>
        <dbReference type="ChEBI" id="CHEBI:37565"/>
        <dbReference type="ChEBI" id="CHEBI:43474"/>
        <dbReference type="ChEBI" id="CHEBI:58614"/>
        <dbReference type="EC" id="3.5.4.25"/>
    </reaction>
</comment>
<comment type="cofactor">
    <cofactor evidence="1">
        <name>Mg(2+)</name>
        <dbReference type="ChEBI" id="CHEBI:18420"/>
    </cofactor>
    <cofactor evidence="1">
        <name>Mn(2+)</name>
        <dbReference type="ChEBI" id="CHEBI:29035"/>
    </cofactor>
    <text evidence="1">Binds 2 divalent metal cations per subunit. Magnesium or manganese.</text>
</comment>
<comment type="cofactor">
    <cofactor evidence="1">
        <name>Zn(2+)</name>
        <dbReference type="ChEBI" id="CHEBI:29105"/>
    </cofactor>
    <text evidence="1">Binds 1 zinc ion per subunit.</text>
</comment>
<comment type="pathway">
    <text evidence="1">Cofactor biosynthesis; riboflavin biosynthesis; 2-hydroxy-3-oxobutyl phosphate from D-ribulose 5-phosphate: step 1/1.</text>
</comment>
<comment type="pathway">
    <text evidence="1">Cofactor biosynthesis; riboflavin biosynthesis; 5-amino-6-(D-ribitylamino)uracil from GTP: step 1/4.</text>
</comment>
<comment type="similarity">
    <text evidence="1">In the N-terminal section; belongs to the DHBP synthase family.</text>
</comment>
<comment type="similarity">
    <text evidence="1">In the C-terminal section; belongs to the GTP cyclohydrolase II family.</text>
</comment>
<sequence length="423" mass="45682">MTRLDSVERAVADIAAGKAVVVIDDEDRENEGDLIFAAEKATPELVAFMVRYTSGYLCVPLAGEICDRLGLLPMYAVNQDKHGTAYTVTVDAKVGVGTGISASDRATTMRLLADPDSVADDFTKPGHVVPLRAKDGGVLRRPGHTEAAVDLARLAGLQAAGTICEIVSQKDEGAMAQTDELRIFADEHDLALISIADLIEWRRKHEKHIARVAEARIPTRHGEFRAVGYTSIYEDVEHVALVKGDIAGPHGDGHDVLVRVHSECLTGDVFGSRRCDCGPQLDAALAMVAREGRGIVLYMRGHEGRGIGLMHKLQAYQLQDAGDDTVDANLKLGLPADARDYGTGAQILVDLGVRSMRLLTNNPAKRVGLDGYGLHIIERVPLPVRANAENIRYLMTKRDRMGHDLVGLDDFDEAVPGEFGGAV</sequence>
<protein>
    <recommendedName>
        <fullName evidence="1">Riboflavin biosynthesis protein RibBA</fullName>
    </recommendedName>
    <domain>
        <recommendedName>
            <fullName evidence="1">3,4-dihydroxy-2-butanone 4-phosphate synthase</fullName>
            <shortName evidence="1">DHBP synthase</shortName>
            <ecNumber evidence="1">4.1.99.12</ecNumber>
        </recommendedName>
    </domain>
    <domain>
        <recommendedName>
            <fullName evidence="1">GTP cyclohydrolase-2</fullName>
            <ecNumber evidence="1">3.5.4.25</ecNumber>
        </recommendedName>
        <alternativeName>
            <fullName evidence="1">GTP cyclohydrolase II</fullName>
        </alternativeName>
    </domain>
</protein>
<keyword id="KW-0342">GTP-binding</keyword>
<keyword id="KW-0378">Hydrolase</keyword>
<keyword id="KW-0456">Lyase</keyword>
<keyword id="KW-0460">Magnesium</keyword>
<keyword id="KW-0464">Manganese</keyword>
<keyword id="KW-0479">Metal-binding</keyword>
<keyword id="KW-0511">Multifunctional enzyme</keyword>
<keyword id="KW-0547">Nucleotide-binding</keyword>
<keyword id="KW-0686">Riboflavin biosynthesis</keyword>
<keyword id="KW-0862">Zinc</keyword>
<organism>
    <name type="scientific">Mycolicibacterium gilvum (strain PYR-GCK)</name>
    <name type="common">Mycobacterium gilvum (strain PYR-GCK)</name>
    <dbReference type="NCBI Taxonomy" id="350054"/>
    <lineage>
        <taxon>Bacteria</taxon>
        <taxon>Bacillati</taxon>
        <taxon>Actinomycetota</taxon>
        <taxon>Actinomycetes</taxon>
        <taxon>Mycobacteriales</taxon>
        <taxon>Mycobacteriaceae</taxon>
        <taxon>Mycolicibacterium</taxon>
    </lineage>
</organism>
<feature type="chain" id="PRO_1000085898" description="Riboflavin biosynthesis protein RibBA">
    <location>
        <begin position="1"/>
        <end position="423"/>
    </location>
</feature>
<feature type="region of interest" description="DHBP synthase">
    <location>
        <begin position="1"/>
        <end position="204"/>
    </location>
</feature>
<feature type="region of interest" description="GTP cyclohydrolase II">
    <location>
        <begin position="205"/>
        <end position="423"/>
    </location>
</feature>
<feature type="active site" description="Proton acceptor; for GTP cyclohydrolase activity" evidence="1">
    <location>
        <position position="337"/>
    </location>
</feature>
<feature type="active site" description="Nucleophile; for GTP cyclohydrolase activity" evidence="1">
    <location>
        <position position="339"/>
    </location>
</feature>
<feature type="binding site" evidence="1">
    <location>
        <begin position="28"/>
        <end position="29"/>
    </location>
    <ligand>
        <name>D-ribulose 5-phosphate</name>
        <dbReference type="ChEBI" id="CHEBI:58121"/>
    </ligand>
</feature>
<feature type="binding site" evidence="1">
    <location>
        <position position="29"/>
    </location>
    <ligand>
        <name>Mg(2+)</name>
        <dbReference type="ChEBI" id="CHEBI:18420"/>
        <label>1</label>
    </ligand>
</feature>
<feature type="binding site" evidence="1">
    <location>
        <position position="29"/>
    </location>
    <ligand>
        <name>Mg(2+)</name>
        <dbReference type="ChEBI" id="CHEBI:18420"/>
        <label>2</label>
    </ligand>
</feature>
<feature type="binding site" evidence="1">
    <location>
        <position position="33"/>
    </location>
    <ligand>
        <name>D-ribulose 5-phosphate</name>
        <dbReference type="ChEBI" id="CHEBI:58121"/>
    </ligand>
</feature>
<feature type="binding site" evidence="1">
    <location>
        <begin position="141"/>
        <end position="145"/>
    </location>
    <ligand>
        <name>D-ribulose 5-phosphate</name>
        <dbReference type="ChEBI" id="CHEBI:58121"/>
    </ligand>
</feature>
<feature type="binding site" evidence="1">
    <location>
        <position position="144"/>
    </location>
    <ligand>
        <name>Mg(2+)</name>
        <dbReference type="ChEBI" id="CHEBI:18420"/>
        <label>2</label>
    </ligand>
</feature>
<feature type="binding site" evidence="1">
    <location>
        <position position="165"/>
    </location>
    <ligand>
        <name>D-ribulose 5-phosphate</name>
        <dbReference type="ChEBI" id="CHEBI:58121"/>
    </ligand>
</feature>
<feature type="binding site" evidence="1">
    <location>
        <begin position="259"/>
        <end position="263"/>
    </location>
    <ligand>
        <name>GTP</name>
        <dbReference type="ChEBI" id="CHEBI:37565"/>
    </ligand>
</feature>
<feature type="binding site" evidence="1">
    <location>
        <position position="264"/>
    </location>
    <ligand>
        <name>Zn(2+)</name>
        <dbReference type="ChEBI" id="CHEBI:29105"/>
        <note>catalytic</note>
    </ligand>
</feature>
<feature type="binding site" evidence="1">
    <location>
        <position position="275"/>
    </location>
    <ligand>
        <name>Zn(2+)</name>
        <dbReference type="ChEBI" id="CHEBI:29105"/>
        <note>catalytic</note>
    </ligand>
</feature>
<feature type="binding site" evidence="1">
    <location>
        <position position="277"/>
    </location>
    <ligand>
        <name>Zn(2+)</name>
        <dbReference type="ChEBI" id="CHEBI:29105"/>
        <note>catalytic</note>
    </ligand>
</feature>
<feature type="binding site" evidence="1">
    <location>
        <position position="280"/>
    </location>
    <ligand>
        <name>GTP</name>
        <dbReference type="ChEBI" id="CHEBI:37565"/>
    </ligand>
</feature>
<feature type="binding site" evidence="1">
    <location>
        <begin position="303"/>
        <end position="305"/>
    </location>
    <ligand>
        <name>GTP</name>
        <dbReference type="ChEBI" id="CHEBI:37565"/>
    </ligand>
</feature>
<feature type="binding site" evidence="1">
    <location>
        <position position="325"/>
    </location>
    <ligand>
        <name>GTP</name>
        <dbReference type="ChEBI" id="CHEBI:37565"/>
    </ligand>
</feature>
<feature type="binding site" evidence="1">
    <location>
        <position position="360"/>
    </location>
    <ligand>
        <name>GTP</name>
        <dbReference type="ChEBI" id="CHEBI:37565"/>
    </ligand>
</feature>
<feature type="binding site" evidence="1">
    <location>
        <position position="365"/>
    </location>
    <ligand>
        <name>GTP</name>
        <dbReference type="ChEBI" id="CHEBI:37565"/>
    </ligand>
</feature>
<feature type="site" description="Essential for DHBP synthase activity" evidence="1">
    <location>
        <position position="127"/>
    </location>
</feature>
<feature type="site" description="Essential for DHBP synthase activity" evidence="1">
    <location>
        <position position="165"/>
    </location>
</feature>
<reference key="1">
    <citation type="submission" date="2007-04" db="EMBL/GenBank/DDBJ databases">
        <title>Complete sequence of chromosome of Mycobacterium gilvum PYR-GCK.</title>
        <authorList>
            <consortium name="US DOE Joint Genome Institute"/>
            <person name="Copeland A."/>
            <person name="Lucas S."/>
            <person name="Lapidus A."/>
            <person name="Barry K."/>
            <person name="Detter J.C."/>
            <person name="Glavina del Rio T."/>
            <person name="Hammon N."/>
            <person name="Israni S."/>
            <person name="Dalin E."/>
            <person name="Tice H."/>
            <person name="Pitluck S."/>
            <person name="Chain P."/>
            <person name="Malfatti S."/>
            <person name="Shin M."/>
            <person name="Vergez L."/>
            <person name="Schmutz J."/>
            <person name="Larimer F."/>
            <person name="Land M."/>
            <person name="Hauser L."/>
            <person name="Kyrpides N."/>
            <person name="Mikhailova N."/>
            <person name="Miller C."/>
            <person name="Richardson P."/>
        </authorList>
    </citation>
    <scope>NUCLEOTIDE SEQUENCE [LARGE SCALE GENOMIC DNA]</scope>
    <source>
        <strain>PYR-GCK</strain>
    </source>
</reference>
<name>RIBBA_MYCGI</name>
<evidence type="ECO:0000255" key="1">
    <source>
        <dbReference type="HAMAP-Rule" id="MF_01283"/>
    </source>
</evidence>
<dbReference type="EC" id="4.1.99.12" evidence="1"/>
<dbReference type="EC" id="3.5.4.25" evidence="1"/>
<dbReference type="EMBL" id="CP000656">
    <property type="protein sequence ID" value="ABP46191.1"/>
    <property type="molecule type" value="Genomic_DNA"/>
</dbReference>
<dbReference type="SMR" id="A4TC13"/>
<dbReference type="STRING" id="350054.Mflv_3719"/>
<dbReference type="KEGG" id="mgi:Mflv_3719"/>
<dbReference type="eggNOG" id="COG0108">
    <property type="taxonomic scope" value="Bacteria"/>
</dbReference>
<dbReference type="eggNOG" id="COG0807">
    <property type="taxonomic scope" value="Bacteria"/>
</dbReference>
<dbReference type="HOGENOM" id="CLU_020273_1_2_11"/>
<dbReference type="OrthoDB" id="9793111at2"/>
<dbReference type="UniPathway" id="UPA00275">
    <property type="reaction ID" value="UER00399"/>
</dbReference>
<dbReference type="UniPathway" id="UPA00275">
    <property type="reaction ID" value="UER00400"/>
</dbReference>
<dbReference type="GO" id="GO:0005829">
    <property type="term" value="C:cytosol"/>
    <property type="evidence" value="ECO:0007669"/>
    <property type="project" value="TreeGrafter"/>
</dbReference>
<dbReference type="GO" id="GO:0008686">
    <property type="term" value="F:3,4-dihydroxy-2-butanone-4-phosphate synthase activity"/>
    <property type="evidence" value="ECO:0007669"/>
    <property type="project" value="UniProtKB-UniRule"/>
</dbReference>
<dbReference type="GO" id="GO:0005525">
    <property type="term" value="F:GTP binding"/>
    <property type="evidence" value="ECO:0007669"/>
    <property type="project" value="UniProtKB-KW"/>
</dbReference>
<dbReference type="GO" id="GO:0003935">
    <property type="term" value="F:GTP cyclohydrolase II activity"/>
    <property type="evidence" value="ECO:0007669"/>
    <property type="project" value="UniProtKB-UniRule"/>
</dbReference>
<dbReference type="GO" id="GO:0000287">
    <property type="term" value="F:magnesium ion binding"/>
    <property type="evidence" value="ECO:0007669"/>
    <property type="project" value="UniProtKB-UniRule"/>
</dbReference>
<dbReference type="GO" id="GO:0030145">
    <property type="term" value="F:manganese ion binding"/>
    <property type="evidence" value="ECO:0007669"/>
    <property type="project" value="UniProtKB-UniRule"/>
</dbReference>
<dbReference type="GO" id="GO:0008270">
    <property type="term" value="F:zinc ion binding"/>
    <property type="evidence" value="ECO:0007669"/>
    <property type="project" value="UniProtKB-UniRule"/>
</dbReference>
<dbReference type="GO" id="GO:0009231">
    <property type="term" value="P:riboflavin biosynthetic process"/>
    <property type="evidence" value="ECO:0007669"/>
    <property type="project" value="UniProtKB-UniRule"/>
</dbReference>
<dbReference type="CDD" id="cd00641">
    <property type="entry name" value="GTP_cyclohydro2"/>
    <property type="match status" value="1"/>
</dbReference>
<dbReference type="FunFam" id="3.40.50.10990:FF:000001">
    <property type="entry name" value="Riboflavin biosynthesis protein RibBA"/>
    <property type="match status" value="1"/>
</dbReference>
<dbReference type="FunFam" id="3.90.870.10:FF:000001">
    <property type="entry name" value="Riboflavin biosynthesis protein RibBA"/>
    <property type="match status" value="1"/>
</dbReference>
<dbReference type="Gene3D" id="3.90.870.10">
    <property type="entry name" value="DHBP synthase"/>
    <property type="match status" value="1"/>
</dbReference>
<dbReference type="Gene3D" id="3.40.50.10990">
    <property type="entry name" value="GTP cyclohydrolase II"/>
    <property type="match status" value="1"/>
</dbReference>
<dbReference type="HAMAP" id="MF_00179">
    <property type="entry name" value="RibA"/>
    <property type="match status" value="1"/>
</dbReference>
<dbReference type="HAMAP" id="MF_00180">
    <property type="entry name" value="RibB"/>
    <property type="match status" value="1"/>
</dbReference>
<dbReference type="HAMAP" id="MF_01283">
    <property type="entry name" value="RibBA"/>
    <property type="match status" value="1"/>
</dbReference>
<dbReference type="InterPro" id="IPR017945">
    <property type="entry name" value="DHBP_synth_RibB-like_a/b_dom"/>
</dbReference>
<dbReference type="InterPro" id="IPR000422">
    <property type="entry name" value="DHBP_synthase_RibB"/>
</dbReference>
<dbReference type="InterPro" id="IPR032677">
    <property type="entry name" value="GTP_cyclohydro_II"/>
</dbReference>
<dbReference type="InterPro" id="IPR000926">
    <property type="entry name" value="RibA"/>
</dbReference>
<dbReference type="InterPro" id="IPR036144">
    <property type="entry name" value="RibA-like_sf"/>
</dbReference>
<dbReference type="InterPro" id="IPR016299">
    <property type="entry name" value="Riboflavin_synth_RibBA"/>
</dbReference>
<dbReference type="NCBIfam" id="NF001591">
    <property type="entry name" value="PRK00393.1"/>
    <property type="match status" value="1"/>
</dbReference>
<dbReference type="NCBIfam" id="NF006803">
    <property type="entry name" value="PRK09311.1"/>
    <property type="match status" value="1"/>
</dbReference>
<dbReference type="NCBIfam" id="TIGR00505">
    <property type="entry name" value="ribA"/>
    <property type="match status" value="1"/>
</dbReference>
<dbReference type="NCBIfam" id="TIGR00506">
    <property type="entry name" value="ribB"/>
    <property type="match status" value="1"/>
</dbReference>
<dbReference type="PANTHER" id="PTHR21327:SF18">
    <property type="entry name" value="3,4-DIHYDROXY-2-BUTANONE 4-PHOSPHATE SYNTHASE"/>
    <property type="match status" value="1"/>
</dbReference>
<dbReference type="PANTHER" id="PTHR21327">
    <property type="entry name" value="GTP CYCLOHYDROLASE II-RELATED"/>
    <property type="match status" value="1"/>
</dbReference>
<dbReference type="Pfam" id="PF00926">
    <property type="entry name" value="DHBP_synthase"/>
    <property type="match status" value="1"/>
</dbReference>
<dbReference type="Pfam" id="PF00925">
    <property type="entry name" value="GTP_cyclohydro2"/>
    <property type="match status" value="1"/>
</dbReference>
<dbReference type="PIRSF" id="PIRSF001259">
    <property type="entry name" value="RibA"/>
    <property type="match status" value="1"/>
</dbReference>
<dbReference type="SUPFAM" id="SSF142695">
    <property type="entry name" value="RibA-like"/>
    <property type="match status" value="1"/>
</dbReference>
<dbReference type="SUPFAM" id="SSF55821">
    <property type="entry name" value="YrdC/RibB"/>
    <property type="match status" value="1"/>
</dbReference>
<accession>A4TC13</accession>